<gene>
    <name evidence="1" type="primary">rpsP</name>
    <name type="ordered locus">BAA_4006</name>
</gene>
<comment type="similarity">
    <text evidence="1">Belongs to the bacterial ribosomal protein bS16 family.</text>
</comment>
<dbReference type="EMBL" id="CP001598">
    <property type="protein sequence ID" value="ACQ47202.1"/>
    <property type="molecule type" value="Genomic_DNA"/>
</dbReference>
<dbReference type="RefSeq" id="WP_000268750.1">
    <property type="nucleotide sequence ID" value="NC_012659.1"/>
</dbReference>
<dbReference type="SMR" id="C3P5P5"/>
<dbReference type="GeneID" id="93007268"/>
<dbReference type="KEGG" id="bai:BAA_4006"/>
<dbReference type="HOGENOM" id="CLU_100590_5_0_9"/>
<dbReference type="GO" id="GO:0005737">
    <property type="term" value="C:cytoplasm"/>
    <property type="evidence" value="ECO:0007669"/>
    <property type="project" value="UniProtKB-ARBA"/>
</dbReference>
<dbReference type="GO" id="GO:0015935">
    <property type="term" value="C:small ribosomal subunit"/>
    <property type="evidence" value="ECO:0007669"/>
    <property type="project" value="TreeGrafter"/>
</dbReference>
<dbReference type="GO" id="GO:0003735">
    <property type="term" value="F:structural constituent of ribosome"/>
    <property type="evidence" value="ECO:0007669"/>
    <property type="project" value="InterPro"/>
</dbReference>
<dbReference type="GO" id="GO:0006412">
    <property type="term" value="P:translation"/>
    <property type="evidence" value="ECO:0007669"/>
    <property type="project" value="UniProtKB-UniRule"/>
</dbReference>
<dbReference type="FunFam" id="3.30.1320.10:FF:000002">
    <property type="entry name" value="30S ribosomal protein S16"/>
    <property type="match status" value="1"/>
</dbReference>
<dbReference type="Gene3D" id="3.30.1320.10">
    <property type="match status" value="1"/>
</dbReference>
<dbReference type="HAMAP" id="MF_00385">
    <property type="entry name" value="Ribosomal_bS16"/>
    <property type="match status" value="1"/>
</dbReference>
<dbReference type="InterPro" id="IPR000307">
    <property type="entry name" value="Ribosomal_bS16"/>
</dbReference>
<dbReference type="InterPro" id="IPR020592">
    <property type="entry name" value="Ribosomal_bS16_CS"/>
</dbReference>
<dbReference type="InterPro" id="IPR023803">
    <property type="entry name" value="Ribosomal_bS16_dom_sf"/>
</dbReference>
<dbReference type="NCBIfam" id="TIGR00002">
    <property type="entry name" value="S16"/>
    <property type="match status" value="1"/>
</dbReference>
<dbReference type="PANTHER" id="PTHR12919">
    <property type="entry name" value="30S RIBOSOMAL PROTEIN S16"/>
    <property type="match status" value="1"/>
</dbReference>
<dbReference type="PANTHER" id="PTHR12919:SF20">
    <property type="entry name" value="SMALL RIBOSOMAL SUBUNIT PROTEIN BS16M"/>
    <property type="match status" value="1"/>
</dbReference>
<dbReference type="Pfam" id="PF00886">
    <property type="entry name" value="Ribosomal_S16"/>
    <property type="match status" value="1"/>
</dbReference>
<dbReference type="SUPFAM" id="SSF54565">
    <property type="entry name" value="Ribosomal protein S16"/>
    <property type="match status" value="1"/>
</dbReference>
<dbReference type="PROSITE" id="PS00732">
    <property type="entry name" value="RIBOSOMAL_S16"/>
    <property type="match status" value="1"/>
</dbReference>
<organism>
    <name type="scientific">Bacillus anthracis (strain A0248)</name>
    <dbReference type="NCBI Taxonomy" id="592021"/>
    <lineage>
        <taxon>Bacteria</taxon>
        <taxon>Bacillati</taxon>
        <taxon>Bacillota</taxon>
        <taxon>Bacilli</taxon>
        <taxon>Bacillales</taxon>
        <taxon>Bacillaceae</taxon>
        <taxon>Bacillus</taxon>
        <taxon>Bacillus cereus group</taxon>
    </lineage>
</organism>
<proteinExistence type="inferred from homology"/>
<name>RS16_BACAA</name>
<sequence>MAVKIRLKRMGAKKTPFYRVVVADSRSPRDGRFIEEIGTYNPVAQPAEVKINEEAALKWLGNGAKPSDTVRNLFSNQGIMEKFHLSKQGK</sequence>
<evidence type="ECO:0000255" key="1">
    <source>
        <dbReference type="HAMAP-Rule" id="MF_00385"/>
    </source>
</evidence>
<evidence type="ECO:0000305" key="2"/>
<keyword id="KW-0687">Ribonucleoprotein</keyword>
<keyword id="KW-0689">Ribosomal protein</keyword>
<reference key="1">
    <citation type="submission" date="2009-04" db="EMBL/GenBank/DDBJ databases">
        <title>Genome sequence of Bacillus anthracis A0248.</title>
        <authorList>
            <person name="Dodson R.J."/>
            <person name="Munk A.C."/>
            <person name="Bruce D."/>
            <person name="Detter C."/>
            <person name="Tapia R."/>
            <person name="Sutton G."/>
            <person name="Sims D."/>
            <person name="Brettin T."/>
        </authorList>
    </citation>
    <scope>NUCLEOTIDE SEQUENCE [LARGE SCALE GENOMIC DNA]</scope>
    <source>
        <strain>A0248</strain>
    </source>
</reference>
<protein>
    <recommendedName>
        <fullName evidence="1">Small ribosomal subunit protein bS16</fullName>
    </recommendedName>
    <alternativeName>
        <fullName evidence="2">30S ribosomal protein S16</fullName>
    </alternativeName>
</protein>
<accession>C3P5P5</accession>
<feature type="chain" id="PRO_1000196328" description="Small ribosomal subunit protein bS16">
    <location>
        <begin position="1"/>
        <end position="90"/>
    </location>
</feature>